<sequence>MQNFKELGISDNTVQSLESMGFKEPTPIQKDSIPYALQGIDILGQAQTGTGKTGAFGIPLIEKVVGKQGVQSLILAPTRELAMQVAEQLREFSRGQGVQVVTVFGGMPIERQIKALKKGPQIVVGTPGRVIDHLNRRTLKTDGIHTLILDEADEMMNMGFIDDMRFIMDKIPAVQRQTMLFSATMPKAIQALVQQFMKSPKIIKTMNNEMSDPQIEEFYTIVKELEKFDTFTNFLDVHQPELAIVFGRTKRRVDELTSALISKGYKAEGLHGDITQAKRLEVLKKFKNDQINILVATDVAARGLDISGVSHVYNFDIPQDTESYTHRIGRTGRAGKEGIAVTFVNPIEMDYIRQIEDANGRKMSALRPPHRKEVLQAREDDIKEKVENWMSKESESRLKRISTELLNEYNDVDLVAALLQELIEANDEVEVQLTFEKPLSRKGRNGKPSGSRNRNSKRGNPKFDSKSKRSKGYSSKKKSTKKFDRKEKSSGGSRPMKGRTFADHQK</sequence>
<gene>
    <name evidence="1" type="primary">cshA</name>
    <name type="ordered locus">SAR2168</name>
</gene>
<reference key="1">
    <citation type="journal article" date="2004" name="Proc. Natl. Acad. Sci. U.S.A.">
        <title>Complete genomes of two clinical Staphylococcus aureus strains: evidence for the rapid evolution of virulence and drug resistance.</title>
        <authorList>
            <person name="Holden M.T.G."/>
            <person name="Feil E.J."/>
            <person name="Lindsay J.A."/>
            <person name="Peacock S.J."/>
            <person name="Day N.P.J."/>
            <person name="Enright M.C."/>
            <person name="Foster T.J."/>
            <person name="Moore C.E."/>
            <person name="Hurst L."/>
            <person name="Atkin R."/>
            <person name="Barron A."/>
            <person name="Bason N."/>
            <person name="Bentley S.D."/>
            <person name="Chillingworth C."/>
            <person name="Chillingworth T."/>
            <person name="Churcher C."/>
            <person name="Clark L."/>
            <person name="Corton C."/>
            <person name="Cronin A."/>
            <person name="Doggett J."/>
            <person name="Dowd L."/>
            <person name="Feltwell T."/>
            <person name="Hance Z."/>
            <person name="Harris B."/>
            <person name="Hauser H."/>
            <person name="Holroyd S."/>
            <person name="Jagels K."/>
            <person name="James K.D."/>
            <person name="Lennard N."/>
            <person name="Line A."/>
            <person name="Mayes R."/>
            <person name="Moule S."/>
            <person name="Mungall K."/>
            <person name="Ormond D."/>
            <person name="Quail M.A."/>
            <person name="Rabbinowitsch E."/>
            <person name="Rutherford K.M."/>
            <person name="Sanders M."/>
            <person name="Sharp S."/>
            <person name="Simmonds M."/>
            <person name="Stevens K."/>
            <person name="Whitehead S."/>
            <person name="Barrell B.G."/>
            <person name="Spratt B.G."/>
            <person name="Parkhill J."/>
        </authorList>
    </citation>
    <scope>NUCLEOTIDE SEQUENCE [LARGE SCALE GENOMIC DNA]</scope>
    <source>
        <strain>MRSA252</strain>
    </source>
</reference>
<accession>Q6GEZ3</accession>
<name>CSHA_STAAR</name>
<protein>
    <recommendedName>
        <fullName evidence="1">DEAD-box ATP-dependent RNA helicase CshA</fullName>
        <ecNumber evidence="1">3.6.4.13</ecNumber>
    </recommendedName>
</protein>
<keyword id="KW-0067">ATP-binding</keyword>
<keyword id="KW-0963">Cytoplasm</keyword>
<keyword id="KW-0347">Helicase</keyword>
<keyword id="KW-0378">Hydrolase</keyword>
<keyword id="KW-0547">Nucleotide-binding</keyword>
<keyword id="KW-0694">RNA-binding</keyword>
<keyword id="KW-0346">Stress response</keyword>
<feature type="chain" id="PRO_0000284820" description="DEAD-box ATP-dependent RNA helicase CshA">
    <location>
        <begin position="1"/>
        <end position="506"/>
    </location>
</feature>
<feature type="domain" description="Helicase ATP-binding" evidence="1">
    <location>
        <begin position="33"/>
        <end position="203"/>
    </location>
</feature>
<feature type="domain" description="Helicase C-terminal" evidence="1">
    <location>
        <begin position="214"/>
        <end position="375"/>
    </location>
</feature>
<feature type="region of interest" description="Disordered" evidence="2">
    <location>
        <begin position="436"/>
        <end position="506"/>
    </location>
</feature>
<feature type="short sequence motif" description="Q motif">
    <location>
        <begin position="2"/>
        <end position="30"/>
    </location>
</feature>
<feature type="short sequence motif" description="DEAD box">
    <location>
        <begin position="150"/>
        <end position="153"/>
    </location>
</feature>
<feature type="compositionally biased region" description="Basic residues" evidence="2">
    <location>
        <begin position="468"/>
        <end position="480"/>
    </location>
</feature>
<feature type="binding site" evidence="1">
    <location>
        <begin position="46"/>
        <end position="53"/>
    </location>
    <ligand>
        <name>ATP</name>
        <dbReference type="ChEBI" id="CHEBI:30616"/>
    </ligand>
</feature>
<evidence type="ECO:0000255" key="1">
    <source>
        <dbReference type="HAMAP-Rule" id="MF_01493"/>
    </source>
</evidence>
<evidence type="ECO:0000256" key="2">
    <source>
        <dbReference type="SAM" id="MobiDB-lite"/>
    </source>
</evidence>
<organism>
    <name type="scientific">Staphylococcus aureus (strain MRSA252)</name>
    <dbReference type="NCBI Taxonomy" id="282458"/>
    <lineage>
        <taxon>Bacteria</taxon>
        <taxon>Bacillati</taxon>
        <taxon>Bacillota</taxon>
        <taxon>Bacilli</taxon>
        <taxon>Bacillales</taxon>
        <taxon>Staphylococcaceae</taxon>
        <taxon>Staphylococcus</taxon>
    </lineage>
</organism>
<comment type="function">
    <text evidence="1">DEAD-box RNA helicase possibly involved in RNA degradation. Unwinds dsRNA in both 5'- and 3'-directions, has RNA-dependent ATPase activity.</text>
</comment>
<comment type="catalytic activity">
    <reaction evidence="1">
        <text>ATP + H2O = ADP + phosphate + H(+)</text>
        <dbReference type="Rhea" id="RHEA:13065"/>
        <dbReference type="ChEBI" id="CHEBI:15377"/>
        <dbReference type="ChEBI" id="CHEBI:15378"/>
        <dbReference type="ChEBI" id="CHEBI:30616"/>
        <dbReference type="ChEBI" id="CHEBI:43474"/>
        <dbReference type="ChEBI" id="CHEBI:456216"/>
        <dbReference type="EC" id="3.6.4.13"/>
    </reaction>
</comment>
<comment type="subunit">
    <text evidence="1">Oligomerizes, may be a member of the RNA degradosome.</text>
</comment>
<comment type="subcellular location">
    <subcellularLocation>
        <location evidence="1">Cytoplasm</location>
    </subcellularLocation>
</comment>
<comment type="similarity">
    <text evidence="1">Belongs to the DEAD box helicase family. CshA subfamily.</text>
</comment>
<dbReference type="EC" id="3.6.4.13" evidence="1"/>
<dbReference type="EMBL" id="BX571856">
    <property type="protein sequence ID" value="CAG41149.1"/>
    <property type="molecule type" value="Genomic_DNA"/>
</dbReference>
<dbReference type="RefSeq" id="WP_001178940.1">
    <property type="nucleotide sequence ID" value="NC_002952.2"/>
</dbReference>
<dbReference type="SMR" id="Q6GEZ3"/>
<dbReference type="IntAct" id="Q6GEZ3">
    <property type="interactions" value="4"/>
</dbReference>
<dbReference type="KEGG" id="sar:SAR2168"/>
<dbReference type="HOGENOM" id="CLU_003041_21_1_9"/>
<dbReference type="Proteomes" id="UP000000596">
    <property type="component" value="Chromosome"/>
</dbReference>
<dbReference type="GO" id="GO:0005829">
    <property type="term" value="C:cytosol"/>
    <property type="evidence" value="ECO:0007669"/>
    <property type="project" value="TreeGrafter"/>
</dbReference>
<dbReference type="GO" id="GO:0005840">
    <property type="term" value="C:ribosome"/>
    <property type="evidence" value="ECO:0007669"/>
    <property type="project" value="TreeGrafter"/>
</dbReference>
<dbReference type="GO" id="GO:0005524">
    <property type="term" value="F:ATP binding"/>
    <property type="evidence" value="ECO:0007669"/>
    <property type="project" value="UniProtKB-UniRule"/>
</dbReference>
<dbReference type="GO" id="GO:0016887">
    <property type="term" value="F:ATP hydrolysis activity"/>
    <property type="evidence" value="ECO:0007669"/>
    <property type="project" value="RHEA"/>
</dbReference>
<dbReference type="GO" id="GO:0003724">
    <property type="term" value="F:RNA helicase activity"/>
    <property type="evidence" value="ECO:0007669"/>
    <property type="project" value="UniProtKB-UniRule"/>
</dbReference>
<dbReference type="GO" id="GO:0033592">
    <property type="term" value="F:RNA strand annealing activity"/>
    <property type="evidence" value="ECO:0007669"/>
    <property type="project" value="TreeGrafter"/>
</dbReference>
<dbReference type="GO" id="GO:0009409">
    <property type="term" value="P:response to cold"/>
    <property type="evidence" value="ECO:0007669"/>
    <property type="project" value="TreeGrafter"/>
</dbReference>
<dbReference type="GO" id="GO:0006401">
    <property type="term" value="P:RNA catabolic process"/>
    <property type="evidence" value="ECO:0007669"/>
    <property type="project" value="UniProtKB-UniRule"/>
</dbReference>
<dbReference type="CDD" id="cd00268">
    <property type="entry name" value="DEADc"/>
    <property type="match status" value="1"/>
</dbReference>
<dbReference type="CDD" id="cd18787">
    <property type="entry name" value="SF2_C_DEAD"/>
    <property type="match status" value="1"/>
</dbReference>
<dbReference type="FunFam" id="3.40.50.300:FF:000108">
    <property type="entry name" value="ATP-dependent RNA helicase RhlE"/>
    <property type="match status" value="1"/>
</dbReference>
<dbReference type="Gene3D" id="3.40.50.300">
    <property type="entry name" value="P-loop containing nucleotide triphosphate hydrolases"/>
    <property type="match status" value="2"/>
</dbReference>
<dbReference type="HAMAP" id="MF_01493">
    <property type="entry name" value="DEAD_helicase_CshA"/>
    <property type="match status" value="1"/>
</dbReference>
<dbReference type="InterPro" id="IPR011545">
    <property type="entry name" value="DEAD/DEAH_box_helicase_dom"/>
</dbReference>
<dbReference type="InterPro" id="IPR050547">
    <property type="entry name" value="DEAD_box_RNA_helicases"/>
</dbReference>
<dbReference type="InterPro" id="IPR030880">
    <property type="entry name" value="DEAD_helicase_CshA"/>
</dbReference>
<dbReference type="InterPro" id="IPR014001">
    <property type="entry name" value="Helicase_ATP-bd"/>
</dbReference>
<dbReference type="InterPro" id="IPR001650">
    <property type="entry name" value="Helicase_C-like"/>
</dbReference>
<dbReference type="InterPro" id="IPR027417">
    <property type="entry name" value="P-loop_NTPase"/>
</dbReference>
<dbReference type="InterPro" id="IPR000629">
    <property type="entry name" value="RNA-helicase_DEAD-box_CS"/>
</dbReference>
<dbReference type="InterPro" id="IPR014014">
    <property type="entry name" value="RNA_helicase_DEAD_Q_motif"/>
</dbReference>
<dbReference type="PANTHER" id="PTHR47963">
    <property type="entry name" value="DEAD-BOX ATP-DEPENDENT RNA HELICASE 47, MITOCHONDRIAL"/>
    <property type="match status" value="1"/>
</dbReference>
<dbReference type="PANTHER" id="PTHR47963:SF5">
    <property type="entry name" value="DEAD-BOX ATP-DEPENDENT RNA HELICASE CSHA"/>
    <property type="match status" value="1"/>
</dbReference>
<dbReference type="Pfam" id="PF00270">
    <property type="entry name" value="DEAD"/>
    <property type="match status" value="1"/>
</dbReference>
<dbReference type="Pfam" id="PF00271">
    <property type="entry name" value="Helicase_C"/>
    <property type="match status" value="1"/>
</dbReference>
<dbReference type="SMART" id="SM00487">
    <property type="entry name" value="DEXDc"/>
    <property type="match status" value="1"/>
</dbReference>
<dbReference type="SMART" id="SM00490">
    <property type="entry name" value="HELICc"/>
    <property type="match status" value="1"/>
</dbReference>
<dbReference type="SUPFAM" id="SSF52540">
    <property type="entry name" value="P-loop containing nucleoside triphosphate hydrolases"/>
    <property type="match status" value="1"/>
</dbReference>
<dbReference type="PROSITE" id="PS00039">
    <property type="entry name" value="DEAD_ATP_HELICASE"/>
    <property type="match status" value="1"/>
</dbReference>
<dbReference type="PROSITE" id="PS51192">
    <property type="entry name" value="HELICASE_ATP_BIND_1"/>
    <property type="match status" value="1"/>
</dbReference>
<dbReference type="PROSITE" id="PS51194">
    <property type="entry name" value="HELICASE_CTER"/>
    <property type="match status" value="1"/>
</dbReference>
<dbReference type="PROSITE" id="PS51195">
    <property type="entry name" value="Q_MOTIF"/>
    <property type="match status" value="1"/>
</dbReference>
<proteinExistence type="inferred from homology"/>